<dbReference type="EC" id="7.1.2.2" evidence="1"/>
<dbReference type="EMBL" id="CP000766">
    <property type="protein sequence ID" value="ABY73176.1"/>
    <property type="status" value="ALT_INIT"/>
    <property type="molecule type" value="Genomic_DNA"/>
</dbReference>
<dbReference type="RefSeq" id="WP_012151343.1">
    <property type="nucleotide sequence ID" value="NC_010263.3"/>
</dbReference>
<dbReference type="SMR" id="B0BVB6"/>
<dbReference type="GeneID" id="79937845"/>
<dbReference type="KEGG" id="rrj:RrIowa_1445"/>
<dbReference type="eggNOG" id="COG0055">
    <property type="taxonomic scope" value="Bacteria"/>
</dbReference>
<dbReference type="HOGENOM" id="CLU_022398_0_2_5"/>
<dbReference type="Proteomes" id="UP000000796">
    <property type="component" value="Chromosome"/>
</dbReference>
<dbReference type="GO" id="GO:0005886">
    <property type="term" value="C:plasma membrane"/>
    <property type="evidence" value="ECO:0007669"/>
    <property type="project" value="UniProtKB-SubCell"/>
</dbReference>
<dbReference type="GO" id="GO:0045259">
    <property type="term" value="C:proton-transporting ATP synthase complex"/>
    <property type="evidence" value="ECO:0007669"/>
    <property type="project" value="UniProtKB-KW"/>
</dbReference>
<dbReference type="GO" id="GO:0005524">
    <property type="term" value="F:ATP binding"/>
    <property type="evidence" value="ECO:0007669"/>
    <property type="project" value="UniProtKB-UniRule"/>
</dbReference>
<dbReference type="GO" id="GO:0016887">
    <property type="term" value="F:ATP hydrolysis activity"/>
    <property type="evidence" value="ECO:0007669"/>
    <property type="project" value="InterPro"/>
</dbReference>
<dbReference type="GO" id="GO:0046933">
    <property type="term" value="F:proton-transporting ATP synthase activity, rotational mechanism"/>
    <property type="evidence" value="ECO:0007669"/>
    <property type="project" value="UniProtKB-UniRule"/>
</dbReference>
<dbReference type="CDD" id="cd18110">
    <property type="entry name" value="ATP-synt_F1_beta_C"/>
    <property type="match status" value="1"/>
</dbReference>
<dbReference type="CDD" id="cd18115">
    <property type="entry name" value="ATP-synt_F1_beta_N"/>
    <property type="match status" value="1"/>
</dbReference>
<dbReference type="CDD" id="cd01133">
    <property type="entry name" value="F1-ATPase_beta_CD"/>
    <property type="match status" value="1"/>
</dbReference>
<dbReference type="FunFam" id="1.10.1140.10:FF:000001">
    <property type="entry name" value="ATP synthase subunit beta"/>
    <property type="match status" value="1"/>
</dbReference>
<dbReference type="FunFam" id="2.40.10.170:FF:000014">
    <property type="entry name" value="ATP synthase subunit beta"/>
    <property type="match status" value="1"/>
</dbReference>
<dbReference type="FunFam" id="3.40.50.300:FF:000026">
    <property type="entry name" value="ATP synthase subunit beta"/>
    <property type="match status" value="1"/>
</dbReference>
<dbReference type="Gene3D" id="2.40.10.170">
    <property type="match status" value="1"/>
</dbReference>
<dbReference type="Gene3D" id="1.10.1140.10">
    <property type="entry name" value="Bovine Mitochondrial F1-atpase, Atp Synthase Beta Chain, Chain D, domain 3"/>
    <property type="match status" value="1"/>
</dbReference>
<dbReference type="Gene3D" id="3.40.50.300">
    <property type="entry name" value="P-loop containing nucleotide triphosphate hydrolases"/>
    <property type="match status" value="1"/>
</dbReference>
<dbReference type="HAMAP" id="MF_01347">
    <property type="entry name" value="ATP_synth_beta_bact"/>
    <property type="match status" value="1"/>
</dbReference>
<dbReference type="InterPro" id="IPR003593">
    <property type="entry name" value="AAA+_ATPase"/>
</dbReference>
<dbReference type="InterPro" id="IPR055190">
    <property type="entry name" value="ATP-synt_VA_C"/>
</dbReference>
<dbReference type="InterPro" id="IPR005722">
    <property type="entry name" value="ATP_synth_F1_bsu"/>
</dbReference>
<dbReference type="InterPro" id="IPR020003">
    <property type="entry name" value="ATPase_a/bsu_AS"/>
</dbReference>
<dbReference type="InterPro" id="IPR050053">
    <property type="entry name" value="ATPase_alpha/beta_chains"/>
</dbReference>
<dbReference type="InterPro" id="IPR004100">
    <property type="entry name" value="ATPase_F1/V1/A1_a/bsu_N"/>
</dbReference>
<dbReference type="InterPro" id="IPR036121">
    <property type="entry name" value="ATPase_F1/V1/A1_a/bsu_N_sf"/>
</dbReference>
<dbReference type="InterPro" id="IPR000194">
    <property type="entry name" value="ATPase_F1/V1/A1_a/bsu_nucl-bd"/>
</dbReference>
<dbReference type="InterPro" id="IPR024034">
    <property type="entry name" value="ATPase_F1/V1_b/a_C"/>
</dbReference>
<dbReference type="InterPro" id="IPR027417">
    <property type="entry name" value="P-loop_NTPase"/>
</dbReference>
<dbReference type="NCBIfam" id="TIGR01039">
    <property type="entry name" value="atpD"/>
    <property type="match status" value="1"/>
</dbReference>
<dbReference type="PANTHER" id="PTHR15184">
    <property type="entry name" value="ATP SYNTHASE"/>
    <property type="match status" value="1"/>
</dbReference>
<dbReference type="PANTHER" id="PTHR15184:SF71">
    <property type="entry name" value="ATP SYNTHASE SUBUNIT BETA, MITOCHONDRIAL"/>
    <property type="match status" value="1"/>
</dbReference>
<dbReference type="Pfam" id="PF00006">
    <property type="entry name" value="ATP-synt_ab"/>
    <property type="match status" value="1"/>
</dbReference>
<dbReference type="Pfam" id="PF02874">
    <property type="entry name" value="ATP-synt_ab_N"/>
    <property type="match status" value="1"/>
</dbReference>
<dbReference type="Pfam" id="PF22919">
    <property type="entry name" value="ATP-synt_VA_C"/>
    <property type="match status" value="1"/>
</dbReference>
<dbReference type="PIRSF" id="PIRSF039072">
    <property type="entry name" value="ATPase_subunit_beta"/>
    <property type="match status" value="1"/>
</dbReference>
<dbReference type="SMART" id="SM00382">
    <property type="entry name" value="AAA"/>
    <property type="match status" value="1"/>
</dbReference>
<dbReference type="SUPFAM" id="SSF47917">
    <property type="entry name" value="C-terminal domain of alpha and beta subunits of F1 ATP synthase"/>
    <property type="match status" value="1"/>
</dbReference>
<dbReference type="SUPFAM" id="SSF50615">
    <property type="entry name" value="N-terminal domain of alpha and beta subunits of F1 ATP synthase"/>
    <property type="match status" value="1"/>
</dbReference>
<dbReference type="SUPFAM" id="SSF52540">
    <property type="entry name" value="P-loop containing nucleoside triphosphate hydrolases"/>
    <property type="match status" value="1"/>
</dbReference>
<dbReference type="PROSITE" id="PS00152">
    <property type="entry name" value="ATPASE_ALPHA_BETA"/>
    <property type="match status" value="1"/>
</dbReference>
<name>ATPB_RICRO</name>
<sequence>MTKNIGKITQIISAVVDVKFTNNGKLPEILNALECYNDTRRVVLEVAQHIGDDTVRCIAMDSMEGLVRGVEVIDTGSPIRIPVGTETLGRIMNVVGEPIDGKGDIKSSNISSIYKPAPDFTNQSTERNILVTGIKVIDLLAPYTKGGKIGLFGGAGVGKTVLIMELINNVAKAHGGYTVFAGVGERTREGNDLYHEMIDSGVINLAEPEKSKVALVYGQMNEPPGARARVALSGLTIAESFRDMNEGQDVLFFVDNIFRFTQAGSEVSALLGRIPSAVGYQPTLATDMGELQERITSTKHGSITSVQAIYVPADDLTDPAPATSFAHLDATTVLSRQIAEFGIYPAVDPLDSNSQVLDPMIVGEEHYSVARQVQQVLQTYKSLQDIITILGMDELSEEDKLTVARARKIQRFLSQPFHVAEVFTGAAGKFVNLADTIAGFKGLVEGKYDDLPEAAFYMVGTIDEAIKKAQTLK</sequence>
<evidence type="ECO:0000255" key="1">
    <source>
        <dbReference type="HAMAP-Rule" id="MF_01347"/>
    </source>
</evidence>
<evidence type="ECO:0000305" key="2"/>
<organism>
    <name type="scientific">Rickettsia rickettsii (strain Iowa)</name>
    <dbReference type="NCBI Taxonomy" id="452659"/>
    <lineage>
        <taxon>Bacteria</taxon>
        <taxon>Pseudomonadati</taxon>
        <taxon>Pseudomonadota</taxon>
        <taxon>Alphaproteobacteria</taxon>
        <taxon>Rickettsiales</taxon>
        <taxon>Rickettsiaceae</taxon>
        <taxon>Rickettsieae</taxon>
        <taxon>Rickettsia</taxon>
        <taxon>spotted fever group</taxon>
    </lineage>
</organism>
<comment type="function">
    <text evidence="1">Produces ATP from ADP in the presence of a proton gradient across the membrane. The catalytic sites are hosted primarily by the beta subunits.</text>
</comment>
<comment type="catalytic activity">
    <reaction evidence="1">
        <text>ATP + H2O + 4 H(+)(in) = ADP + phosphate + 5 H(+)(out)</text>
        <dbReference type="Rhea" id="RHEA:57720"/>
        <dbReference type="ChEBI" id="CHEBI:15377"/>
        <dbReference type="ChEBI" id="CHEBI:15378"/>
        <dbReference type="ChEBI" id="CHEBI:30616"/>
        <dbReference type="ChEBI" id="CHEBI:43474"/>
        <dbReference type="ChEBI" id="CHEBI:456216"/>
        <dbReference type="EC" id="7.1.2.2"/>
    </reaction>
</comment>
<comment type="subunit">
    <text evidence="1">F-type ATPases have 2 components, CF(1) - the catalytic core - and CF(0) - the membrane proton channel. CF(1) has five subunits: alpha(3), beta(3), gamma(1), delta(1), epsilon(1). CF(0) has three main subunits: a(1), b(2) and c(9-12). The alpha and beta chains form an alternating ring which encloses part of the gamma chain. CF(1) is attached to CF(0) by a central stalk formed by the gamma and epsilon chains, while a peripheral stalk is formed by the delta and b chains.</text>
</comment>
<comment type="subcellular location">
    <subcellularLocation>
        <location evidence="1">Cell inner membrane</location>
        <topology evidence="1">Peripheral membrane protein</topology>
    </subcellularLocation>
</comment>
<comment type="similarity">
    <text evidence="1">Belongs to the ATPase alpha/beta chains family.</text>
</comment>
<comment type="sequence caution" evidence="2">
    <conflict type="erroneous initiation">
        <sequence resource="EMBL-CDS" id="ABY73176"/>
    </conflict>
</comment>
<feature type="chain" id="PRO_0000339583" description="ATP synthase subunit beta">
    <location>
        <begin position="1"/>
        <end position="473"/>
    </location>
</feature>
<feature type="binding site" evidence="1">
    <location>
        <begin position="153"/>
        <end position="160"/>
    </location>
    <ligand>
        <name>ATP</name>
        <dbReference type="ChEBI" id="CHEBI:30616"/>
    </ligand>
</feature>
<protein>
    <recommendedName>
        <fullName evidence="1">ATP synthase subunit beta</fullName>
        <ecNumber evidence="1">7.1.2.2</ecNumber>
    </recommendedName>
    <alternativeName>
        <fullName evidence="1">ATP synthase F1 sector subunit beta</fullName>
    </alternativeName>
    <alternativeName>
        <fullName evidence="1">F-ATPase subunit beta</fullName>
    </alternativeName>
</protein>
<proteinExistence type="inferred from homology"/>
<accession>B0BVB6</accession>
<keyword id="KW-0066">ATP synthesis</keyword>
<keyword id="KW-0067">ATP-binding</keyword>
<keyword id="KW-0997">Cell inner membrane</keyword>
<keyword id="KW-1003">Cell membrane</keyword>
<keyword id="KW-0139">CF(1)</keyword>
<keyword id="KW-0375">Hydrogen ion transport</keyword>
<keyword id="KW-0406">Ion transport</keyword>
<keyword id="KW-0472">Membrane</keyword>
<keyword id="KW-0547">Nucleotide-binding</keyword>
<keyword id="KW-1278">Translocase</keyword>
<keyword id="KW-0813">Transport</keyword>
<reference key="1">
    <citation type="journal article" date="2008" name="Infect. Immun.">
        <title>Genomic comparison of virulent Rickettsia rickettsii Sheila Smith and avirulent Rickettsia rickettsii Iowa.</title>
        <authorList>
            <person name="Ellison D.W."/>
            <person name="Clark T.R."/>
            <person name="Sturdevant D.E."/>
            <person name="Virtaneva K."/>
            <person name="Porcella S.F."/>
            <person name="Hackstadt T."/>
        </authorList>
    </citation>
    <scope>NUCLEOTIDE SEQUENCE [LARGE SCALE GENOMIC DNA]</scope>
    <source>
        <strain>Iowa</strain>
    </source>
</reference>
<gene>
    <name evidence="1" type="primary">atpD</name>
    <name type="ordered locus">RrIowa_1445</name>
</gene>